<feature type="chain" id="PRO_0000301291" description="Phosphoglucosamine mutase">
    <location>
        <begin position="1"/>
        <end position="452"/>
    </location>
</feature>
<feature type="active site" description="Phosphoserine intermediate" evidence="1">
    <location>
        <position position="108"/>
    </location>
</feature>
<feature type="binding site" description="via phosphate group" evidence="1">
    <location>
        <position position="108"/>
    </location>
    <ligand>
        <name>Mg(2+)</name>
        <dbReference type="ChEBI" id="CHEBI:18420"/>
    </ligand>
</feature>
<feature type="binding site" evidence="1">
    <location>
        <position position="247"/>
    </location>
    <ligand>
        <name>Mg(2+)</name>
        <dbReference type="ChEBI" id="CHEBI:18420"/>
    </ligand>
</feature>
<feature type="binding site" evidence="1">
    <location>
        <position position="249"/>
    </location>
    <ligand>
        <name>Mg(2+)</name>
        <dbReference type="ChEBI" id="CHEBI:18420"/>
    </ligand>
</feature>
<feature type="binding site" evidence="1">
    <location>
        <position position="251"/>
    </location>
    <ligand>
        <name>Mg(2+)</name>
        <dbReference type="ChEBI" id="CHEBI:18420"/>
    </ligand>
</feature>
<feature type="modified residue" description="Phosphoserine" evidence="1">
    <location>
        <position position="108"/>
    </location>
</feature>
<keyword id="KW-0413">Isomerase</keyword>
<keyword id="KW-0460">Magnesium</keyword>
<keyword id="KW-0479">Metal-binding</keyword>
<keyword id="KW-0597">Phosphoprotein</keyword>
<accession>A3NTW6</accession>
<organism>
    <name type="scientific">Burkholderia pseudomallei (strain 1106a)</name>
    <dbReference type="NCBI Taxonomy" id="357348"/>
    <lineage>
        <taxon>Bacteria</taxon>
        <taxon>Pseudomonadati</taxon>
        <taxon>Pseudomonadota</taxon>
        <taxon>Betaproteobacteria</taxon>
        <taxon>Burkholderiales</taxon>
        <taxon>Burkholderiaceae</taxon>
        <taxon>Burkholderia</taxon>
        <taxon>pseudomallei group</taxon>
    </lineage>
</organism>
<comment type="function">
    <text evidence="1">Catalyzes the conversion of glucosamine-6-phosphate to glucosamine-1-phosphate.</text>
</comment>
<comment type="catalytic activity">
    <reaction evidence="1">
        <text>alpha-D-glucosamine 1-phosphate = D-glucosamine 6-phosphate</text>
        <dbReference type="Rhea" id="RHEA:23424"/>
        <dbReference type="ChEBI" id="CHEBI:58516"/>
        <dbReference type="ChEBI" id="CHEBI:58725"/>
        <dbReference type="EC" id="5.4.2.10"/>
    </reaction>
</comment>
<comment type="cofactor">
    <cofactor evidence="1">
        <name>Mg(2+)</name>
        <dbReference type="ChEBI" id="CHEBI:18420"/>
    </cofactor>
    <text evidence="1">Binds 1 Mg(2+) ion per subunit.</text>
</comment>
<comment type="PTM">
    <text evidence="1">Activated by phosphorylation.</text>
</comment>
<comment type="similarity">
    <text evidence="1">Belongs to the phosphohexose mutase family.</text>
</comment>
<name>GLMM_BURP0</name>
<gene>
    <name evidence="1" type="primary">glmM</name>
    <name type="ordered locus">BURPS1106A_1514</name>
</gene>
<sequence length="452" mass="47624">MGRRYFGTDGIRGKVGDAPITPDFVLRLGYAAGKVLASAPGRAASGARPTVLIGKDTRVSGYMLEAALEAGFSAAGVDVMLAGPMPTPGVAYLTRALRLSAGVVISASHNPYHDNGIKFFSADGNKLPDEIEAEIEAWLDKPLDCAASDGLGKARRLDDAAGRYIEFCKSTFPAAFDLRGMKLVVDCAHGAAYQVAPHVFHELGADVIPIGVAPNGFNINDGVGATAPDALMRAVRANHADLGIALDGDADRLLVVDHTGRLYNGDELLYVLVKDRIATNGQVEGAVGTLMTNFAVEVALKEAGVQFVRAAVGDRYVLEQLRERGWQLGAEGSGHILSLDRHSTGDGIVSALLVLAALKRSGKTLAQMLEGVTLFPQKLINVRMKPGADWKGSEAIRRAIDSAEQALSGSGRVLIRASGTEPVLRVMVEARQATDANRHAEAIADAVKQATA</sequence>
<evidence type="ECO:0000255" key="1">
    <source>
        <dbReference type="HAMAP-Rule" id="MF_01554"/>
    </source>
</evidence>
<proteinExistence type="inferred from homology"/>
<reference key="1">
    <citation type="journal article" date="2010" name="Genome Biol. Evol.">
        <title>Continuing evolution of Burkholderia mallei through genome reduction and large-scale rearrangements.</title>
        <authorList>
            <person name="Losada L."/>
            <person name="Ronning C.M."/>
            <person name="DeShazer D."/>
            <person name="Woods D."/>
            <person name="Fedorova N."/>
            <person name="Kim H.S."/>
            <person name="Shabalina S.A."/>
            <person name="Pearson T.R."/>
            <person name="Brinkac L."/>
            <person name="Tan P."/>
            <person name="Nandi T."/>
            <person name="Crabtree J."/>
            <person name="Badger J."/>
            <person name="Beckstrom-Sternberg S."/>
            <person name="Saqib M."/>
            <person name="Schutzer S.E."/>
            <person name="Keim P."/>
            <person name="Nierman W.C."/>
        </authorList>
    </citation>
    <scope>NUCLEOTIDE SEQUENCE [LARGE SCALE GENOMIC DNA]</scope>
    <source>
        <strain>1106a</strain>
    </source>
</reference>
<protein>
    <recommendedName>
        <fullName evidence="1">Phosphoglucosamine mutase</fullName>
        <ecNumber evidence="1">5.4.2.10</ecNumber>
    </recommendedName>
</protein>
<dbReference type="EC" id="5.4.2.10" evidence="1"/>
<dbReference type="EMBL" id="CP000572">
    <property type="protein sequence ID" value="ABN91688.1"/>
    <property type="molecule type" value="Genomic_DNA"/>
</dbReference>
<dbReference type="RefSeq" id="WP_004266863.1">
    <property type="nucleotide sequence ID" value="NC_009076.1"/>
</dbReference>
<dbReference type="SMR" id="A3NTW6"/>
<dbReference type="GeneID" id="93059857"/>
<dbReference type="KEGG" id="bpl:BURPS1106A_1514"/>
<dbReference type="HOGENOM" id="CLU_016950_7_0_4"/>
<dbReference type="Proteomes" id="UP000006738">
    <property type="component" value="Chromosome I"/>
</dbReference>
<dbReference type="GO" id="GO:0005829">
    <property type="term" value="C:cytosol"/>
    <property type="evidence" value="ECO:0007669"/>
    <property type="project" value="TreeGrafter"/>
</dbReference>
<dbReference type="GO" id="GO:0000287">
    <property type="term" value="F:magnesium ion binding"/>
    <property type="evidence" value="ECO:0007669"/>
    <property type="project" value="UniProtKB-UniRule"/>
</dbReference>
<dbReference type="GO" id="GO:0008966">
    <property type="term" value="F:phosphoglucosamine mutase activity"/>
    <property type="evidence" value="ECO:0007669"/>
    <property type="project" value="UniProtKB-UniRule"/>
</dbReference>
<dbReference type="GO" id="GO:0004615">
    <property type="term" value="F:phosphomannomutase activity"/>
    <property type="evidence" value="ECO:0007669"/>
    <property type="project" value="TreeGrafter"/>
</dbReference>
<dbReference type="GO" id="GO:0005975">
    <property type="term" value="P:carbohydrate metabolic process"/>
    <property type="evidence" value="ECO:0007669"/>
    <property type="project" value="InterPro"/>
</dbReference>
<dbReference type="GO" id="GO:0009252">
    <property type="term" value="P:peptidoglycan biosynthetic process"/>
    <property type="evidence" value="ECO:0007669"/>
    <property type="project" value="TreeGrafter"/>
</dbReference>
<dbReference type="GO" id="GO:0006048">
    <property type="term" value="P:UDP-N-acetylglucosamine biosynthetic process"/>
    <property type="evidence" value="ECO:0007669"/>
    <property type="project" value="TreeGrafter"/>
</dbReference>
<dbReference type="CDD" id="cd05802">
    <property type="entry name" value="GlmM"/>
    <property type="match status" value="1"/>
</dbReference>
<dbReference type="FunFam" id="3.30.310.50:FF:000001">
    <property type="entry name" value="Phosphoglucosamine mutase"/>
    <property type="match status" value="1"/>
</dbReference>
<dbReference type="FunFam" id="3.40.120.10:FF:000001">
    <property type="entry name" value="Phosphoglucosamine mutase"/>
    <property type="match status" value="1"/>
</dbReference>
<dbReference type="FunFam" id="3.40.120.10:FF:000003">
    <property type="entry name" value="Phosphoglucosamine mutase"/>
    <property type="match status" value="1"/>
</dbReference>
<dbReference type="Gene3D" id="3.40.120.10">
    <property type="entry name" value="Alpha-D-Glucose-1,6-Bisphosphate, subunit A, domain 3"/>
    <property type="match status" value="3"/>
</dbReference>
<dbReference type="Gene3D" id="3.30.310.50">
    <property type="entry name" value="Alpha-D-phosphohexomutase, C-terminal domain"/>
    <property type="match status" value="1"/>
</dbReference>
<dbReference type="HAMAP" id="MF_01554_B">
    <property type="entry name" value="GlmM_B"/>
    <property type="match status" value="1"/>
</dbReference>
<dbReference type="InterPro" id="IPR005844">
    <property type="entry name" value="A-D-PHexomutase_a/b/a-I"/>
</dbReference>
<dbReference type="InterPro" id="IPR016055">
    <property type="entry name" value="A-D-PHexomutase_a/b/a-I/II/III"/>
</dbReference>
<dbReference type="InterPro" id="IPR005845">
    <property type="entry name" value="A-D-PHexomutase_a/b/a-II"/>
</dbReference>
<dbReference type="InterPro" id="IPR005846">
    <property type="entry name" value="A-D-PHexomutase_a/b/a-III"/>
</dbReference>
<dbReference type="InterPro" id="IPR005843">
    <property type="entry name" value="A-D-PHexomutase_C"/>
</dbReference>
<dbReference type="InterPro" id="IPR036900">
    <property type="entry name" value="A-D-PHexomutase_C_sf"/>
</dbReference>
<dbReference type="InterPro" id="IPR016066">
    <property type="entry name" value="A-D-PHexomutase_CS"/>
</dbReference>
<dbReference type="InterPro" id="IPR005841">
    <property type="entry name" value="Alpha-D-phosphohexomutase_SF"/>
</dbReference>
<dbReference type="InterPro" id="IPR006352">
    <property type="entry name" value="GlmM_bact"/>
</dbReference>
<dbReference type="InterPro" id="IPR050060">
    <property type="entry name" value="Phosphoglucosamine_mutase"/>
</dbReference>
<dbReference type="NCBIfam" id="TIGR01455">
    <property type="entry name" value="glmM"/>
    <property type="match status" value="1"/>
</dbReference>
<dbReference type="NCBIfam" id="NF008139">
    <property type="entry name" value="PRK10887.1"/>
    <property type="match status" value="1"/>
</dbReference>
<dbReference type="PANTHER" id="PTHR42946:SF1">
    <property type="entry name" value="PHOSPHOGLUCOMUTASE (ALPHA-D-GLUCOSE-1,6-BISPHOSPHATE-DEPENDENT)"/>
    <property type="match status" value="1"/>
</dbReference>
<dbReference type="PANTHER" id="PTHR42946">
    <property type="entry name" value="PHOSPHOHEXOSE MUTASE"/>
    <property type="match status" value="1"/>
</dbReference>
<dbReference type="Pfam" id="PF02878">
    <property type="entry name" value="PGM_PMM_I"/>
    <property type="match status" value="1"/>
</dbReference>
<dbReference type="Pfam" id="PF02879">
    <property type="entry name" value="PGM_PMM_II"/>
    <property type="match status" value="1"/>
</dbReference>
<dbReference type="Pfam" id="PF02880">
    <property type="entry name" value="PGM_PMM_III"/>
    <property type="match status" value="1"/>
</dbReference>
<dbReference type="Pfam" id="PF00408">
    <property type="entry name" value="PGM_PMM_IV"/>
    <property type="match status" value="1"/>
</dbReference>
<dbReference type="PRINTS" id="PR00509">
    <property type="entry name" value="PGMPMM"/>
</dbReference>
<dbReference type="SUPFAM" id="SSF55957">
    <property type="entry name" value="Phosphoglucomutase, C-terminal domain"/>
    <property type="match status" value="1"/>
</dbReference>
<dbReference type="SUPFAM" id="SSF53738">
    <property type="entry name" value="Phosphoglucomutase, first 3 domains"/>
    <property type="match status" value="3"/>
</dbReference>
<dbReference type="PROSITE" id="PS00710">
    <property type="entry name" value="PGM_PMM"/>
    <property type="match status" value="1"/>
</dbReference>